<comment type="function">
    <text evidence="4 5 6 8">Sulfotransferase that utilizes 3'-phospho-5'-adenylyl sulfate (PAPS) to catalyze the sulfate conjugation of phenolic compounds (PubMed:10481272, PubMed:10783263, PubMed:9852044). Does not transfer sulfate to steroids, dopamine, acetaminophen, or alpha-naphthol (PubMed:10481272, PubMed:9852044). Except in mitochondria, where it can add sulfate to cholesterol producing cholesterol sulfate, which alters mitochondrial membrane organization, and impacts protein complex mobility increasing state-III respiration, thereby modulating mitochondrial respiration (By similarity). Catalyzes the sulfation of the carcinogenic N-hydroxy-2-acetylaminofluorene leading to highly reactive intermediates capable of forming DNA adducts, potentially resulting in mutagenesis (PubMed:9852044).</text>
</comment>
<comment type="catalytic activity">
    <reaction evidence="5 6 8">
        <text>a phenol + 3'-phosphoadenylyl sulfate = an aryl sulfate + adenosine 3',5'-bisphosphate + H(+)</text>
        <dbReference type="Rhea" id="RHEA:12164"/>
        <dbReference type="ChEBI" id="CHEBI:15378"/>
        <dbReference type="ChEBI" id="CHEBI:33853"/>
        <dbReference type="ChEBI" id="CHEBI:58339"/>
        <dbReference type="ChEBI" id="CHEBI:58343"/>
        <dbReference type="ChEBI" id="CHEBI:140317"/>
        <dbReference type="EC" id="2.8.2.1"/>
    </reaction>
    <physiologicalReaction direction="left-to-right" evidence="11 12 13">
        <dbReference type="Rhea" id="RHEA:12165"/>
    </physiologicalReaction>
</comment>
<comment type="catalytic activity">
    <reaction evidence="4">
        <text>cholesterol + 3'-phosphoadenylyl sulfate = cholesterol sulfate + adenosine 3',5'-bisphosphate + H(+)</text>
        <dbReference type="Rhea" id="RHEA:52368"/>
        <dbReference type="ChEBI" id="CHEBI:15378"/>
        <dbReference type="ChEBI" id="CHEBI:16113"/>
        <dbReference type="ChEBI" id="CHEBI:58339"/>
        <dbReference type="ChEBI" id="CHEBI:58343"/>
        <dbReference type="ChEBI" id="CHEBI:136579"/>
    </reaction>
    <physiologicalReaction direction="left-to-right" evidence="4">
        <dbReference type="Rhea" id="RHEA:52369"/>
    </physiologicalReaction>
</comment>
<comment type="biophysicochemical properties">
    <kinetics>
        <KM evidence="5">13.3 mM for p-nitrophenol</KM>
        <Vmax evidence="5">0.005 nmol/min/mg enzyme with p-nitrophenol as substrate</Vmax>
    </kinetics>
</comment>
<comment type="interaction">
    <interactant intactId="EBI-3913419">
        <id>O00338</id>
    </interactant>
    <interactant intactId="EBI-717399">
        <id>Q9BSI4</id>
        <label>TINF2</label>
    </interactant>
    <organismsDiffer>false</organismsDiffer>
    <experiments>2</experiments>
</comment>
<comment type="subcellular location">
    <subcellularLocation>
        <location evidence="2">Cytoplasm</location>
    </subcellularLocation>
    <subcellularLocation>
        <location evidence="4">Lysosome</location>
    </subcellularLocation>
    <subcellularLocation>
        <location evidence="4">Mitochondrion</location>
    </subcellularLocation>
</comment>
<comment type="alternative products">
    <event type="alternative splicing"/>
    <isoform>
        <id>O00338-1</id>
        <name>Short</name>
        <sequence type="displayed"/>
    </isoform>
    <isoform>
        <id>O00338-2</id>
        <name>Long</name>
        <sequence type="described" ref="VSP_006303"/>
    </isoform>
</comment>
<comment type="tissue specificity">
    <text>Found in adult stomach, kidney and thyroid gland, and in fetal kidney and liver.</text>
</comment>
<comment type="similarity">
    <text evidence="10">Belongs to the sulfotransferase 1 family.</text>
</comment>
<evidence type="ECO:0000250" key="1"/>
<evidence type="ECO:0000250" key="2">
    <source>
        <dbReference type="UniProtKB" id="O46503"/>
    </source>
</evidence>
<evidence type="ECO:0000250" key="3">
    <source>
        <dbReference type="UniProtKB" id="Q9D939"/>
    </source>
</evidence>
<evidence type="ECO:0000250" key="4">
    <source>
        <dbReference type="UniProtKB" id="Q9WUW8"/>
    </source>
</evidence>
<evidence type="ECO:0000269" key="5">
    <source>
    </source>
</evidence>
<evidence type="ECO:0000269" key="6">
    <source>
    </source>
</evidence>
<evidence type="ECO:0000269" key="7">
    <source>
    </source>
</evidence>
<evidence type="ECO:0000269" key="8">
    <source>
    </source>
</evidence>
<evidence type="ECO:0000303" key="9">
    <source>
    </source>
</evidence>
<evidence type="ECO:0000305" key="10"/>
<evidence type="ECO:0000305" key="11">
    <source>
    </source>
</evidence>
<evidence type="ECO:0000305" key="12">
    <source>
    </source>
</evidence>
<evidence type="ECO:0000305" key="13">
    <source>
    </source>
</evidence>
<evidence type="ECO:0007829" key="14">
    <source>
        <dbReference type="PDB" id="3BFX"/>
    </source>
</evidence>
<accession>O00338</accession>
<accession>B2R813</accession>
<accession>Q53SG4</accession>
<reference key="1">
    <citation type="journal article" date="1997" name="Genomics">
        <title>Human sulfotransferase SULT1C1: cDNA cloning, tissue-specific expression, and chromosomal localization.</title>
        <authorList>
            <person name="Her C."/>
            <person name="Kaur G.P."/>
            <person name="Athwal R.S."/>
            <person name="Weinshilboum R.M."/>
        </authorList>
    </citation>
    <scope>NUCLEOTIDE SEQUENCE [MRNA]</scope>
    <source>
        <tissue>Fetal liver</tissue>
        <tissue>Fetal spleen</tissue>
    </source>
</reference>
<reference key="2">
    <citation type="journal article" date="1998" name="Carcinogenesis">
        <title>Molecular characterization of ST1C1-related human sulfotransferase.</title>
        <authorList>
            <person name="Yoshinari K."/>
            <person name="Nagata K."/>
            <person name="Shimada M."/>
            <person name="Yamazoe Y."/>
        </authorList>
    </citation>
    <scope>NUCLEOTIDE SEQUENCE [MRNA]</scope>
    <source>
        <tissue>Fetal liver</tissue>
    </source>
</reference>
<reference key="3">
    <citation type="journal article" date="1998" name="J. Biol. Chem.">
        <title>Molecular cloning, expression, and characterization of novel human SULT1C sulfotransferases that catalyze the sulfonation of N-hydroxy-2-acetylaminofluorene.</title>
        <authorList>
            <person name="Sakakibara Y."/>
            <person name="Yanagisawa K."/>
            <person name="Katafuchi J."/>
            <person name="Ringer D.P."/>
            <person name="Takami Y."/>
            <person name="Nakayama T."/>
            <person name="Suiko M."/>
            <person name="Liu M.-C."/>
        </authorList>
    </citation>
    <scope>NUCLEOTIDE SEQUENCE [MRNA]</scope>
    <scope>FUNCTION</scope>
    <scope>CATALYTIC ACTIVITY</scope>
    <source>
        <tissue>Fetal lung</tissue>
    </source>
</reference>
<reference key="4">
    <citation type="journal article" date="1999" name="Int. J. Biochem. Cell Biol.">
        <title>Molecular cloning, expression, localisation and functional characterisation of a rabbit SULT1C2 sulfotransferase.</title>
        <authorList>
            <person name="Hehonah N."/>
            <person name="Zhu X."/>
            <person name="Brix L."/>
            <person name="Bolton-Grob R."/>
            <person name="Barnett A."/>
            <person name="Windmill K."/>
            <person name="McManus M."/>
        </authorList>
    </citation>
    <scope>NUCLEOTIDE SEQUENCE [MRNA]</scope>
    <scope>CATALYTIC ACTIVITY</scope>
    <scope>FUNCTION</scope>
    <scope>BIOPHYSICOCHEMICAL PROPERTIES</scope>
    <source>
        <tissue>Stomach</tissue>
    </source>
</reference>
<reference key="5">
    <citation type="journal article" date="2000" name="Genomics">
        <title>Human sulfotransferases SULT1C1 and SULT1C2: cDNA characterization, gene cloning, and chromosomal localization.</title>
        <authorList>
            <person name="Freimuth R.R."/>
            <person name="Raftogianis R.B."/>
            <person name="Wood T.C."/>
            <person name="Moon E."/>
            <person name="Kim U.-J."/>
            <person name="Xu J."/>
            <person name="Siciliano M.J."/>
            <person name="Weinshilboum R.M."/>
        </authorList>
    </citation>
    <scope>NUCLEOTIDE SEQUENCE [MRNA]</scope>
    <scope>ALTERNATIVE SPLICING</scope>
    <scope>CATALYTIC ACTIVITY</scope>
    <scope>FUNCTION</scope>
</reference>
<reference key="6">
    <citation type="submission" date="2003-05" db="EMBL/GenBank/DDBJ databases">
        <title>Cloning of human full-length CDSs in BD Creator(TM) system donor vector.</title>
        <authorList>
            <person name="Kalnine N."/>
            <person name="Chen X."/>
            <person name="Rolfs A."/>
            <person name="Halleck A."/>
            <person name="Hines L."/>
            <person name="Eisenstein S."/>
            <person name="Koundinya M."/>
            <person name="Raphael J."/>
            <person name="Moreira D."/>
            <person name="Kelley T."/>
            <person name="LaBaer J."/>
            <person name="Lin Y."/>
            <person name="Phelan M."/>
            <person name="Farmer A."/>
        </authorList>
    </citation>
    <scope>NUCLEOTIDE SEQUENCE [LARGE SCALE MRNA] (ISOFORM SHORT)</scope>
</reference>
<reference key="7">
    <citation type="journal article" date="2004" name="Nat. Genet.">
        <title>Complete sequencing and characterization of 21,243 full-length human cDNAs.</title>
        <authorList>
            <person name="Ota T."/>
            <person name="Suzuki Y."/>
            <person name="Nishikawa T."/>
            <person name="Otsuki T."/>
            <person name="Sugiyama T."/>
            <person name="Irie R."/>
            <person name="Wakamatsu A."/>
            <person name="Hayashi K."/>
            <person name="Sato H."/>
            <person name="Nagai K."/>
            <person name="Kimura K."/>
            <person name="Makita H."/>
            <person name="Sekine M."/>
            <person name="Obayashi M."/>
            <person name="Nishi T."/>
            <person name="Shibahara T."/>
            <person name="Tanaka T."/>
            <person name="Ishii S."/>
            <person name="Yamamoto J."/>
            <person name="Saito K."/>
            <person name="Kawai Y."/>
            <person name="Isono Y."/>
            <person name="Nakamura Y."/>
            <person name="Nagahari K."/>
            <person name="Murakami K."/>
            <person name="Yasuda T."/>
            <person name="Iwayanagi T."/>
            <person name="Wagatsuma M."/>
            <person name="Shiratori A."/>
            <person name="Sudo H."/>
            <person name="Hosoiri T."/>
            <person name="Kaku Y."/>
            <person name="Kodaira H."/>
            <person name="Kondo H."/>
            <person name="Sugawara M."/>
            <person name="Takahashi M."/>
            <person name="Kanda K."/>
            <person name="Yokoi T."/>
            <person name="Furuya T."/>
            <person name="Kikkawa E."/>
            <person name="Omura Y."/>
            <person name="Abe K."/>
            <person name="Kamihara K."/>
            <person name="Katsuta N."/>
            <person name="Sato K."/>
            <person name="Tanikawa M."/>
            <person name="Yamazaki M."/>
            <person name="Ninomiya K."/>
            <person name="Ishibashi T."/>
            <person name="Yamashita H."/>
            <person name="Murakawa K."/>
            <person name="Fujimori K."/>
            <person name="Tanai H."/>
            <person name="Kimata M."/>
            <person name="Watanabe M."/>
            <person name="Hiraoka S."/>
            <person name="Chiba Y."/>
            <person name="Ishida S."/>
            <person name="Ono Y."/>
            <person name="Takiguchi S."/>
            <person name="Watanabe S."/>
            <person name="Yosida M."/>
            <person name="Hotuta T."/>
            <person name="Kusano J."/>
            <person name="Kanehori K."/>
            <person name="Takahashi-Fujii A."/>
            <person name="Hara H."/>
            <person name="Tanase T.-O."/>
            <person name="Nomura Y."/>
            <person name="Togiya S."/>
            <person name="Komai F."/>
            <person name="Hara R."/>
            <person name="Takeuchi K."/>
            <person name="Arita M."/>
            <person name="Imose N."/>
            <person name="Musashino K."/>
            <person name="Yuuki H."/>
            <person name="Oshima A."/>
            <person name="Sasaki N."/>
            <person name="Aotsuka S."/>
            <person name="Yoshikawa Y."/>
            <person name="Matsunawa H."/>
            <person name="Ichihara T."/>
            <person name="Shiohata N."/>
            <person name="Sano S."/>
            <person name="Moriya S."/>
            <person name="Momiyama H."/>
            <person name="Satoh N."/>
            <person name="Takami S."/>
            <person name="Terashima Y."/>
            <person name="Suzuki O."/>
            <person name="Nakagawa S."/>
            <person name="Senoh A."/>
            <person name="Mizoguchi H."/>
            <person name="Goto Y."/>
            <person name="Shimizu F."/>
            <person name="Wakebe H."/>
            <person name="Hishigaki H."/>
            <person name="Watanabe T."/>
            <person name="Sugiyama A."/>
            <person name="Takemoto M."/>
            <person name="Kawakami B."/>
            <person name="Yamazaki M."/>
            <person name="Watanabe K."/>
            <person name="Kumagai A."/>
            <person name="Itakura S."/>
            <person name="Fukuzumi Y."/>
            <person name="Fujimori Y."/>
            <person name="Komiyama M."/>
            <person name="Tashiro H."/>
            <person name="Tanigami A."/>
            <person name="Fujiwara T."/>
            <person name="Ono T."/>
            <person name="Yamada K."/>
            <person name="Fujii Y."/>
            <person name="Ozaki K."/>
            <person name="Hirao M."/>
            <person name="Ohmori Y."/>
            <person name="Kawabata A."/>
            <person name="Hikiji T."/>
            <person name="Kobatake N."/>
            <person name="Inagaki H."/>
            <person name="Ikema Y."/>
            <person name="Okamoto S."/>
            <person name="Okitani R."/>
            <person name="Kawakami T."/>
            <person name="Noguchi S."/>
            <person name="Itoh T."/>
            <person name="Shigeta K."/>
            <person name="Senba T."/>
            <person name="Matsumura K."/>
            <person name="Nakajima Y."/>
            <person name="Mizuno T."/>
            <person name="Morinaga M."/>
            <person name="Sasaki M."/>
            <person name="Togashi T."/>
            <person name="Oyama M."/>
            <person name="Hata H."/>
            <person name="Watanabe M."/>
            <person name="Komatsu T."/>
            <person name="Mizushima-Sugano J."/>
            <person name="Satoh T."/>
            <person name="Shirai Y."/>
            <person name="Takahashi Y."/>
            <person name="Nakagawa K."/>
            <person name="Okumura K."/>
            <person name="Nagase T."/>
            <person name="Nomura N."/>
            <person name="Kikuchi H."/>
            <person name="Masuho Y."/>
            <person name="Yamashita R."/>
            <person name="Nakai K."/>
            <person name="Yada T."/>
            <person name="Nakamura Y."/>
            <person name="Ohara O."/>
            <person name="Isogai T."/>
            <person name="Sugano S."/>
        </authorList>
    </citation>
    <scope>NUCLEOTIDE SEQUENCE [LARGE SCALE MRNA] (ISOFORM SHORT)</scope>
    <source>
        <tissue>Kidney</tissue>
    </source>
</reference>
<reference key="8">
    <citation type="journal article" date="2005" name="Nature">
        <title>Generation and annotation of the DNA sequences of human chromosomes 2 and 4.</title>
        <authorList>
            <person name="Hillier L.W."/>
            <person name="Graves T.A."/>
            <person name="Fulton R.S."/>
            <person name="Fulton L.A."/>
            <person name="Pepin K.H."/>
            <person name="Minx P."/>
            <person name="Wagner-McPherson C."/>
            <person name="Layman D."/>
            <person name="Wylie K."/>
            <person name="Sekhon M."/>
            <person name="Becker M.C."/>
            <person name="Fewell G.A."/>
            <person name="Delehaunty K.D."/>
            <person name="Miner T.L."/>
            <person name="Nash W.E."/>
            <person name="Kremitzki C."/>
            <person name="Oddy L."/>
            <person name="Du H."/>
            <person name="Sun H."/>
            <person name="Bradshaw-Cordum H."/>
            <person name="Ali J."/>
            <person name="Carter J."/>
            <person name="Cordes M."/>
            <person name="Harris A."/>
            <person name="Isak A."/>
            <person name="van Brunt A."/>
            <person name="Nguyen C."/>
            <person name="Du F."/>
            <person name="Courtney L."/>
            <person name="Kalicki J."/>
            <person name="Ozersky P."/>
            <person name="Abbott S."/>
            <person name="Armstrong J."/>
            <person name="Belter E.A."/>
            <person name="Caruso L."/>
            <person name="Cedroni M."/>
            <person name="Cotton M."/>
            <person name="Davidson T."/>
            <person name="Desai A."/>
            <person name="Elliott G."/>
            <person name="Erb T."/>
            <person name="Fronick C."/>
            <person name="Gaige T."/>
            <person name="Haakenson W."/>
            <person name="Haglund K."/>
            <person name="Holmes A."/>
            <person name="Harkins R."/>
            <person name="Kim K."/>
            <person name="Kruchowski S.S."/>
            <person name="Strong C.M."/>
            <person name="Grewal N."/>
            <person name="Goyea E."/>
            <person name="Hou S."/>
            <person name="Levy A."/>
            <person name="Martinka S."/>
            <person name="Mead K."/>
            <person name="McLellan M.D."/>
            <person name="Meyer R."/>
            <person name="Randall-Maher J."/>
            <person name="Tomlinson C."/>
            <person name="Dauphin-Kohlberg S."/>
            <person name="Kozlowicz-Reilly A."/>
            <person name="Shah N."/>
            <person name="Swearengen-Shahid S."/>
            <person name="Snider J."/>
            <person name="Strong J.T."/>
            <person name="Thompson J."/>
            <person name="Yoakum M."/>
            <person name="Leonard S."/>
            <person name="Pearman C."/>
            <person name="Trani L."/>
            <person name="Radionenko M."/>
            <person name="Waligorski J.E."/>
            <person name="Wang C."/>
            <person name="Rock S.M."/>
            <person name="Tin-Wollam A.-M."/>
            <person name="Maupin R."/>
            <person name="Latreille P."/>
            <person name="Wendl M.C."/>
            <person name="Yang S.-P."/>
            <person name="Pohl C."/>
            <person name="Wallis J.W."/>
            <person name="Spieth J."/>
            <person name="Bieri T.A."/>
            <person name="Berkowicz N."/>
            <person name="Nelson J.O."/>
            <person name="Osborne J."/>
            <person name="Ding L."/>
            <person name="Meyer R."/>
            <person name="Sabo A."/>
            <person name="Shotland Y."/>
            <person name="Sinha P."/>
            <person name="Wohldmann P.E."/>
            <person name="Cook L.L."/>
            <person name="Hickenbotham M.T."/>
            <person name="Eldred J."/>
            <person name="Williams D."/>
            <person name="Jones T.A."/>
            <person name="She X."/>
            <person name="Ciccarelli F.D."/>
            <person name="Izaurralde E."/>
            <person name="Taylor J."/>
            <person name="Schmutz J."/>
            <person name="Myers R.M."/>
            <person name="Cox D.R."/>
            <person name="Huang X."/>
            <person name="McPherson J.D."/>
            <person name="Mardis E.R."/>
            <person name="Clifton S.W."/>
            <person name="Warren W.C."/>
            <person name="Chinwalla A.T."/>
            <person name="Eddy S.R."/>
            <person name="Marra M.A."/>
            <person name="Ovcharenko I."/>
            <person name="Furey T.S."/>
            <person name="Miller W."/>
            <person name="Eichler E.E."/>
            <person name="Bork P."/>
            <person name="Suyama M."/>
            <person name="Torrents D."/>
            <person name="Waterston R.H."/>
            <person name="Wilson R.K."/>
        </authorList>
    </citation>
    <scope>NUCLEOTIDE SEQUENCE [LARGE SCALE GENOMIC DNA]</scope>
</reference>
<reference key="9">
    <citation type="submission" date="2005-09" db="EMBL/GenBank/DDBJ databases">
        <authorList>
            <person name="Mural R.J."/>
            <person name="Istrail S."/>
            <person name="Sutton G.G."/>
            <person name="Florea L."/>
            <person name="Halpern A.L."/>
            <person name="Mobarry C.M."/>
            <person name="Lippert R."/>
            <person name="Walenz B."/>
            <person name="Shatkay H."/>
            <person name="Dew I."/>
            <person name="Miller J.R."/>
            <person name="Flanigan M.J."/>
            <person name="Edwards N.J."/>
            <person name="Bolanos R."/>
            <person name="Fasulo D."/>
            <person name="Halldorsson B.V."/>
            <person name="Hannenhalli S."/>
            <person name="Turner R."/>
            <person name="Yooseph S."/>
            <person name="Lu F."/>
            <person name="Nusskern D.R."/>
            <person name="Shue B.C."/>
            <person name="Zheng X.H."/>
            <person name="Zhong F."/>
            <person name="Delcher A.L."/>
            <person name="Huson D.H."/>
            <person name="Kravitz S.A."/>
            <person name="Mouchard L."/>
            <person name="Reinert K."/>
            <person name="Remington K.A."/>
            <person name="Clark A.G."/>
            <person name="Waterman M.S."/>
            <person name="Eichler E.E."/>
            <person name="Adams M.D."/>
            <person name="Hunkapiller M.W."/>
            <person name="Myers E.W."/>
            <person name="Venter J.C."/>
        </authorList>
    </citation>
    <scope>NUCLEOTIDE SEQUENCE [LARGE SCALE GENOMIC DNA]</scope>
</reference>
<reference key="10">
    <citation type="journal article" date="2004" name="Genome Res.">
        <title>The status, quality, and expansion of the NIH full-length cDNA project: the Mammalian Gene Collection (MGC).</title>
        <authorList>
            <consortium name="The MGC Project Team"/>
        </authorList>
    </citation>
    <scope>NUCLEOTIDE SEQUENCE [LARGE SCALE MRNA]</scope>
    <source>
        <tissue>Kidney</tissue>
    </source>
</reference>
<reference key="11">
    <citation type="journal article" date="2006" name="Proteins">
        <title>Crystal structures of human sulfotransferases SULT1B1 and SULT1C1 complexed with the cofactor product adenosine-3'- 5'-diphosphate (PAP).</title>
        <authorList>
            <person name="Dombrovski L."/>
            <person name="Dong A."/>
            <person name="Bochkarev A."/>
            <person name="Plotnikov A.N."/>
        </authorList>
    </citation>
    <scope>X-RAY CRYSTALLOGRAPHY (1.8 ANGSTROMS) OF 3-296 IN COMPLEX WITH ADENOSINE-3'- 5'-DIPHOSPHATE</scope>
</reference>
<sequence>MALTSDLGKQIKLKEVEGTLLQPATVDNWSQIQSFEAKPDDLLICTYPKAGTTWIQEIVDMIEQNGDVEKCQRAIIQHRHPFIEWARPPQPSGVEKAKAMPSPRILKTHLSTQLLPPSFWENNCKFLYVARNAKDCMVSYYHFQRMNHMLPDPGTWEEYFETFINGKVVWGSWFDHVKGWWEMKDRHQILFLFYEDIKRDPKHEIRKVMQFMGKKVDETVLDKIVQETSFEKMKENPMTNRSTVSKSILDQSISSFMRKGTVGDWKNHFTVAQNERFDEIYRRKMEGTSINFCMEL</sequence>
<proteinExistence type="evidence at protein level"/>
<protein>
    <recommendedName>
        <fullName>Sulfotransferase 1C2</fullName>
        <shortName>ST1C2</shortName>
        <ecNumber evidence="5 6 8">2.8.2.1</ecNumber>
    </recommendedName>
    <alternativeName>
        <fullName>Sulfotransferase 1C1</fullName>
        <shortName evidence="9">SULT1C#1</shortName>
    </alternativeName>
    <alternativeName>
        <fullName>humSULTC2</fullName>
    </alternativeName>
</protein>
<organism>
    <name type="scientific">Homo sapiens</name>
    <name type="common">Human</name>
    <dbReference type="NCBI Taxonomy" id="9606"/>
    <lineage>
        <taxon>Eukaryota</taxon>
        <taxon>Metazoa</taxon>
        <taxon>Chordata</taxon>
        <taxon>Craniata</taxon>
        <taxon>Vertebrata</taxon>
        <taxon>Euteleostomi</taxon>
        <taxon>Mammalia</taxon>
        <taxon>Eutheria</taxon>
        <taxon>Euarchontoglires</taxon>
        <taxon>Primates</taxon>
        <taxon>Haplorrhini</taxon>
        <taxon>Catarrhini</taxon>
        <taxon>Hominidae</taxon>
        <taxon>Homo</taxon>
    </lineage>
</organism>
<keyword id="KW-0002">3D-structure</keyword>
<keyword id="KW-0025">Alternative splicing</keyword>
<keyword id="KW-0963">Cytoplasm</keyword>
<keyword id="KW-0458">Lysosome</keyword>
<keyword id="KW-0496">Mitochondrion</keyword>
<keyword id="KW-0597">Phosphoprotein</keyword>
<keyword id="KW-1267">Proteomics identification</keyword>
<keyword id="KW-1185">Reference proteome</keyword>
<keyword id="KW-0808">Transferase</keyword>
<gene>
    <name type="primary">SULT1C2</name>
    <name type="synonym">SULT1C1</name>
</gene>
<name>ST1C2_HUMAN</name>
<dbReference type="EC" id="2.8.2.1" evidence="5 6 8"/>
<dbReference type="EMBL" id="U66036">
    <property type="protein sequence ID" value="AAC51285.1"/>
    <property type="molecule type" value="mRNA"/>
</dbReference>
<dbReference type="EMBL" id="AB008164">
    <property type="protein sequence ID" value="BAA28346.1"/>
    <property type="molecule type" value="mRNA"/>
</dbReference>
<dbReference type="EMBL" id="AF026303">
    <property type="protein sequence ID" value="AAC00409.1"/>
    <property type="molecule type" value="mRNA"/>
</dbReference>
<dbReference type="EMBL" id="AF186251">
    <property type="protein sequence ID" value="AAF72799.1"/>
    <property type="molecule type" value="mRNA"/>
</dbReference>
<dbReference type="EMBL" id="AF186252">
    <property type="protein sequence ID" value="AAF72800.1"/>
    <property type="molecule type" value="mRNA"/>
</dbReference>
<dbReference type="EMBL" id="AF186253">
    <property type="protein sequence ID" value="AAF72801.1"/>
    <property type="molecule type" value="mRNA"/>
</dbReference>
<dbReference type="EMBL" id="AF186254">
    <property type="protein sequence ID" value="AAF72802.1"/>
    <property type="molecule type" value="mRNA"/>
</dbReference>
<dbReference type="EMBL" id="AF186255">
    <property type="protein sequence ID" value="AAF72803.1"/>
    <property type="molecule type" value="mRNA"/>
</dbReference>
<dbReference type="EMBL" id="AF186256">
    <property type="protein sequence ID" value="AAF72804.1"/>
    <property type="molecule type" value="mRNA"/>
</dbReference>
<dbReference type="EMBL" id="AF186262">
    <property type="protein sequence ID" value="AAF72805.1"/>
    <property type="molecule type" value="Genomic_DNA"/>
</dbReference>
<dbReference type="EMBL" id="AF186258">
    <property type="protein sequence ID" value="AAF72805.1"/>
    <property type="status" value="JOINED"/>
    <property type="molecule type" value="Genomic_DNA"/>
</dbReference>
<dbReference type="EMBL" id="AF186260">
    <property type="protein sequence ID" value="AAF72805.1"/>
    <property type="status" value="JOINED"/>
    <property type="molecule type" value="Genomic_DNA"/>
</dbReference>
<dbReference type="EMBL" id="AF186261">
    <property type="protein sequence ID" value="AAF72805.1"/>
    <property type="status" value="JOINED"/>
    <property type="molecule type" value="Genomic_DNA"/>
</dbReference>
<dbReference type="EMBL" id="AF186262">
    <property type="protein sequence ID" value="AAF72806.1"/>
    <property type="molecule type" value="Genomic_DNA"/>
</dbReference>
<dbReference type="EMBL" id="AF186258">
    <property type="protein sequence ID" value="AAF72806.1"/>
    <property type="status" value="JOINED"/>
    <property type="molecule type" value="Genomic_DNA"/>
</dbReference>
<dbReference type="EMBL" id="AF186259">
    <property type="protein sequence ID" value="AAF72806.1"/>
    <property type="status" value="JOINED"/>
    <property type="molecule type" value="Genomic_DNA"/>
</dbReference>
<dbReference type="EMBL" id="AF186260">
    <property type="protein sequence ID" value="AAF72806.1"/>
    <property type="status" value="JOINED"/>
    <property type="molecule type" value="Genomic_DNA"/>
</dbReference>
<dbReference type="EMBL" id="AF186261">
    <property type="protein sequence ID" value="AAF72806.1"/>
    <property type="status" value="JOINED"/>
    <property type="molecule type" value="Genomic_DNA"/>
</dbReference>
<dbReference type="EMBL" id="BT006951">
    <property type="protein sequence ID" value="AAP35597.1"/>
    <property type="molecule type" value="mRNA"/>
</dbReference>
<dbReference type="EMBL" id="AK313193">
    <property type="protein sequence ID" value="BAG36010.1"/>
    <property type="molecule type" value="mRNA"/>
</dbReference>
<dbReference type="EMBL" id="AC019100">
    <property type="protein sequence ID" value="AAY14790.1"/>
    <property type="molecule type" value="Genomic_DNA"/>
</dbReference>
<dbReference type="EMBL" id="CH471182">
    <property type="protein sequence ID" value="EAW53889.1"/>
    <property type="molecule type" value="Genomic_DNA"/>
</dbReference>
<dbReference type="EMBL" id="CH471182">
    <property type="protein sequence ID" value="EAW53890.1"/>
    <property type="molecule type" value="Genomic_DNA"/>
</dbReference>
<dbReference type="EMBL" id="BC005353">
    <property type="protein sequence ID" value="AAH05353.1"/>
    <property type="molecule type" value="mRNA"/>
</dbReference>
<dbReference type="CCDS" id="CCDS2075.1">
    <molecule id="O00338-1"/>
</dbReference>
<dbReference type="CCDS" id="CCDS2076.1">
    <molecule id="O00338-2"/>
</dbReference>
<dbReference type="RefSeq" id="NP_001047.1">
    <molecule id="O00338-1"/>
    <property type="nucleotide sequence ID" value="NM_001056.4"/>
</dbReference>
<dbReference type="RefSeq" id="NP_789795.1">
    <molecule id="O00338-2"/>
    <property type="nucleotide sequence ID" value="NM_176825.3"/>
</dbReference>
<dbReference type="PDB" id="3BFX">
    <property type="method" value="X-ray"/>
    <property type="resolution" value="1.80 A"/>
    <property type="chains" value="A/B=3-296"/>
</dbReference>
<dbReference type="PDBsum" id="3BFX"/>
<dbReference type="SMR" id="O00338"/>
<dbReference type="BioGRID" id="112688">
    <property type="interactions" value="18"/>
</dbReference>
<dbReference type="FunCoup" id="O00338">
    <property type="interactions" value="471"/>
</dbReference>
<dbReference type="IntAct" id="O00338">
    <property type="interactions" value="16"/>
</dbReference>
<dbReference type="STRING" id="9606.ENSP00000319622"/>
<dbReference type="ChEMBL" id="CHEMBL1743295"/>
<dbReference type="DrugBank" id="DB12243">
    <property type="generic name" value="Edaravone"/>
</dbReference>
<dbReference type="DrugBank" id="DB12471">
    <property type="generic name" value="Ibrexafungerp"/>
</dbReference>
<dbReference type="DrugBank" id="DB00968">
    <property type="generic name" value="Methyldopa"/>
</dbReference>
<dbReference type="DrugBank" id="DB00960">
    <property type="generic name" value="Pindolol"/>
</dbReference>
<dbReference type="DrugBank" id="DB00867">
    <property type="generic name" value="Ritodrine"/>
</dbReference>
<dbReference type="DrugBank" id="DB00871">
    <property type="generic name" value="Terbutaline"/>
</dbReference>
<dbReference type="DrugBank" id="DB09100">
    <property type="generic name" value="Thyroid, porcine"/>
</dbReference>
<dbReference type="GlyGen" id="O00338">
    <property type="glycosylation" value="2 sites, 1 O-linked glycan (2 sites)"/>
</dbReference>
<dbReference type="iPTMnet" id="O00338"/>
<dbReference type="PhosphoSitePlus" id="O00338"/>
<dbReference type="BioMuta" id="SULT1C2"/>
<dbReference type="jPOST" id="O00338"/>
<dbReference type="MassIVE" id="O00338"/>
<dbReference type="PaxDb" id="9606-ENSP00000319622"/>
<dbReference type="PeptideAtlas" id="O00338"/>
<dbReference type="ProteomicsDB" id="47854">
    <molecule id="O00338-1"/>
</dbReference>
<dbReference type="ProteomicsDB" id="47855">
    <molecule id="O00338-2"/>
</dbReference>
<dbReference type="Antibodypedia" id="1928">
    <property type="antibodies" value="317 antibodies from 27 providers"/>
</dbReference>
<dbReference type="DNASU" id="6819"/>
<dbReference type="Ensembl" id="ENST00000251481.11">
    <molecule id="O00338-1"/>
    <property type="protein sequence ID" value="ENSP00000251481.6"/>
    <property type="gene ID" value="ENSG00000198203.10"/>
</dbReference>
<dbReference type="Ensembl" id="ENST00000326853.9">
    <molecule id="O00338-2"/>
    <property type="protein sequence ID" value="ENSP00000319622.5"/>
    <property type="gene ID" value="ENSG00000198203.10"/>
</dbReference>
<dbReference type="GeneID" id="6819"/>
<dbReference type="KEGG" id="hsa:6819"/>
<dbReference type="MANE-Select" id="ENST00000251481.11">
    <property type="protein sequence ID" value="ENSP00000251481.6"/>
    <property type="RefSeq nucleotide sequence ID" value="NM_001056.4"/>
    <property type="RefSeq protein sequence ID" value="NP_001047.1"/>
</dbReference>
<dbReference type="UCSC" id="uc002tdx.3">
    <molecule id="O00338-1"/>
    <property type="organism name" value="human"/>
</dbReference>
<dbReference type="AGR" id="HGNC:11456"/>
<dbReference type="CTD" id="6819"/>
<dbReference type="DisGeNET" id="6819"/>
<dbReference type="GeneCards" id="SULT1C2"/>
<dbReference type="HGNC" id="HGNC:11456">
    <property type="gene designation" value="SULT1C2"/>
</dbReference>
<dbReference type="HPA" id="ENSG00000198203">
    <property type="expression patterns" value="Group enriched (kidney, stomach)"/>
</dbReference>
<dbReference type="MIM" id="602385">
    <property type="type" value="gene"/>
</dbReference>
<dbReference type="neXtProt" id="NX_O00338"/>
<dbReference type="OpenTargets" id="ENSG00000198203"/>
<dbReference type="PharmGKB" id="PA164742557"/>
<dbReference type="VEuPathDB" id="HostDB:ENSG00000198203"/>
<dbReference type="eggNOG" id="KOG1584">
    <property type="taxonomic scope" value="Eukaryota"/>
</dbReference>
<dbReference type="GeneTree" id="ENSGT00940000160912"/>
<dbReference type="HOGENOM" id="CLU_027239_1_2_1"/>
<dbReference type="InParanoid" id="O00338"/>
<dbReference type="OMA" id="DHAAEYW"/>
<dbReference type="OrthoDB" id="205623at2759"/>
<dbReference type="PAN-GO" id="O00338">
    <property type="GO annotations" value="3 GO annotations based on evolutionary models"/>
</dbReference>
<dbReference type="PhylomeDB" id="O00338"/>
<dbReference type="TreeFam" id="TF321745"/>
<dbReference type="PathwayCommons" id="O00338"/>
<dbReference type="Reactome" id="R-HSA-156584">
    <property type="pathway name" value="Cytosolic sulfonation of small molecules"/>
</dbReference>
<dbReference type="SignaLink" id="O00338"/>
<dbReference type="BioGRID-ORCS" id="6819">
    <property type="hits" value="11 hits in 1146 CRISPR screens"/>
</dbReference>
<dbReference type="EvolutionaryTrace" id="O00338"/>
<dbReference type="GeneWiki" id="SULT1C2"/>
<dbReference type="GenomeRNAi" id="6819"/>
<dbReference type="Pharos" id="O00338">
    <property type="development level" value="Tbio"/>
</dbReference>
<dbReference type="PRO" id="PR:O00338"/>
<dbReference type="Proteomes" id="UP000005640">
    <property type="component" value="Chromosome 2"/>
</dbReference>
<dbReference type="RNAct" id="O00338">
    <property type="molecule type" value="protein"/>
</dbReference>
<dbReference type="Bgee" id="ENSG00000198203">
    <property type="expression patterns" value="Expressed in pylorus and 147 other cell types or tissues"/>
</dbReference>
<dbReference type="ExpressionAtlas" id="O00338">
    <property type="expression patterns" value="baseline and differential"/>
</dbReference>
<dbReference type="GO" id="GO:0005737">
    <property type="term" value="C:cytoplasm"/>
    <property type="evidence" value="ECO:0000318"/>
    <property type="project" value="GO_Central"/>
</dbReference>
<dbReference type="GO" id="GO:0005829">
    <property type="term" value="C:cytosol"/>
    <property type="evidence" value="ECO:0000304"/>
    <property type="project" value="Reactome"/>
</dbReference>
<dbReference type="GO" id="GO:0005764">
    <property type="term" value="C:lysosome"/>
    <property type="evidence" value="ECO:0007669"/>
    <property type="project" value="UniProtKB-SubCell"/>
</dbReference>
<dbReference type="GO" id="GO:0005739">
    <property type="term" value="C:mitochondrion"/>
    <property type="evidence" value="ECO:0007669"/>
    <property type="project" value="UniProtKB-SubCell"/>
</dbReference>
<dbReference type="GO" id="GO:0004062">
    <property type="term" value="F:aryl sulfotransferase activity"/>
    <property type="evidence" value="ECO:0000314"/>
    <property type="project" value="UniProtKB"/>
</dbReference>
<dbReference type="GO" id="GO:0051922">
    <property type="term" value="F:cholesterol sulfotransferase activity"/>
    <property type="evidence" value="ECO:0007669"/>
    <property type="project" value="RHEA"/>
</dbReference>
<dbReference type="GO" id="GO:0008146">
    <property type="term" value="F:sulfotransferase activity"/>
    <property type="evidence" value="ECO:0000314"/>
    <property type="project" value="MGI"/>
</dbReference>
<dbReference type="GO" id="GO:0009308">
    <property type="term" value="P:amine metabolic process"/>
    <property type="evidence" value="ECO:0000304"/>
    <property type="project" value="ProtInc"/>
</dbReference>
<dbReference type="GO" id="GO:0051923">
    <property type="term" value="P:sulfation"/>
    <property type="evidence" value="ECO:0000314"/>
    <property type="project" value="UniProtKB"/>
</dbReference>
<dbReference type="FunFam" id="3.40.50.300:FF:000433">
    <property type="entry name" value="Estrogen sulfotransferase"/>
    <property type="match status" value="1"/>
</dbReference>
<dbReference type="Gene3D" id="3.40.50.300">
    <property type="entry name" value="P-loop containing nucleotide triphosphate hydrolases"/>
    <property type="match status" value="1"/>
</dbReference>
<dbReference type="InterPro" id="IPR027417">
    <property type="entry name" value="P-loop_NTPase"/>
</dbReference>
<dbReference type="InterPro" id="IPR000863">
    <property type="entry name" value="Sulfotransferase_dom"/>
</dbReference>
<dbReference type="PANTHER" id="PTHR11783">
    <property type="entry name" value="SULFOTRANSFERASE SULT"/>
    <property type="match status" value="1"/>
</dbReference>
<dbReference type="Pfam" id="PF00685">
    <property type="entry name" value="Sulfotransfer_1"/>
    <property type="match status" value="1"/>
</dbReference>
<dbReference type="SUPFAM" id="SSF52540">
    <property type="entry name" value="P-loop containing nucleoside triphosphate hydrolases"/>
    <property type="match status" value="1"/>
</dbReference>
<feature type="chain" id="PRO_0000085132" description="Sulfotransferase 1C2">
    <location>
        <begin position="1"/>
        <end position="296"/>
    </location>
</feature>
<feature type="active site" description="Proton acceptor" evidence="1">
    <location>
        <position position="109"/>
    </location>
</feature>
<feature type="binding site" evidence="7">
    <location>
        <begin position="49"/>
        <end position="54"/>
    </location>
    <ligand>
        <name>3'-phosphoadenylyl sulfate</name>
        <dbReference type="ChEBI" id="CHEBI:58339"/>
    </ligand>
</feature>
<feature type="binding site" evidence="1">
    <location>
        <begin position="107"/>
        <end position="109"/>
    </location>
    <ligand>
        <name>substrate</name>
    </ligand>
</feature>
<feature type="binding site" evidence="7">
    <location>
        <position position="131"/>
    </location>
    <ligand>
        <name>3'-phosphoadenylyl sulfate</name>
        <dbReference type="ChEBI" id="CHEBI:58339"/>
    </ligand>
</feature>
<feature type="binding site" evidence="7">
    <location>
        <position position="139"/>
    </location>
    <ligand>
        <name>3'-phosphoadenylyl sulfate</name>
        <dbReference type="ChEBI" id="CHEBI:58339"/>
    </ligand>
</feature>
<feature type="binding site" evidence="7">
    <location>
        <position position="194"/>
    </location>
    <ligand>
        <name>3'-phosphoadenylyl sulfate</name>
        <dbReference type="ChEBI" id="CHEBI:58339"/>
    </ligand>
</feature>
<feature type="binding site" evidence="7">
    <location>
        <begin position="228"/>
        <end position="233"/>
    </location>
    <ligand>
        <name>3'-phosphoadenylyl sulfate</name>
        <dbReference type="ChEBI" id="CHEBI:58339"/>
    </ligand>
</feature>
<feature type="binding site" evidence="7">
    <location>
        <begin position="256"/>
        <end position="260"/>
    </location>
    <ligand>
        <name>3'-phosphoadenylyl sulfate</name>
        <dbReference type="ChEBI" id="CHEBI:58339"/>
    </ligand>
</feature>
<feature type="modified residue" description="Phosphoserine" evidence="3">
    <location>
        <position position="139"/>
    </location>
</feature>
<feature type="modified residue" description="Phosphoserine" evidence="3">
    <location>
        <position position="254"/>
    </location>
</feature>
<feature type="splice variant" id="VSP_006303" description="In isoform Long." evidence="10">
    <original>GVEKAKAMPSPRILKTHLSTQ</original>
    <variation>ETGFHHVAQAGLKLLSSSNPPASTSQSAKITD</variation>
    <location>
        <begin position="93"/>
        <end position="113"/>
    </location>
</feature>
<feature type="sequence variant" id="VAR_021986" description="In dbSNP:rs17036091.">
    <original>Y</original>
    <variation>H</variation>
    <location>
        <position position="128"/>
    </location>
</feature>
<feature type="sequence variant" id="VAR_021987" description="In dbSNP:rs17036104.">
    <original>S</original>
    <variation>A</variation>
    <location>
        <position position="255"/>
    </location>
</feature>
<feature type="sequence variant" id="VAR_061888" description="In dbSNP:rs45515691.">
    <original>R</original>
    <variation>T</variation>
    <location>
        <position position="282"/>
    </location>
</feature>
<feature type="strand" evidence="14">
    <location>
        <begin position="14"/>
        <end position="16"/>
    </location>
</feature>
<feature type="strand" evidence="14">
    <location>
        <begin position="19"/>
        <end position="21"/>
    </location>
</feature>
<feature type="helix" evidence="14">
    <location>
        <begin position="23"/>
        <end position="27"/>
    </location>
</feature>
<feature type="helix" evidence="14">
    <location>
        <begin position="29"/>
        <end position="33"/>
    </location>
</feature>
<feature type="strand" evidence="14">
    <location>
        <begin position="42"/>
        <end position="46"/>
    </location>
</feature>
<feature type="helix" evidence="14">
    <location>
        <begin position="52"/>
        <end position="64"/>
    </location>
</feature>
<feature type="helix" evidence="14">
    <location>
        <begin position="93"/>
        <end position="99"/>
    </location>
</feature>
<feature type="strand" evidence="14">
    <location>
        <begin position="105"/>
        <end position="108"/>
    </location>
</feature>
<feature type="turn" evidence="14">
    <location>
        <begin position="112"/>
        <end position="114"/>
    </location>
</feature>
<feature type="helix" evidence="14">
    <location>
        <begin position="118"/>
        <end position="121"/>
    </location>
</feature>
<feature type="strand" evidence="14">
    <location>
        <begin position="125"/>
        <end position="130"/>
    </location>
</feature>
<feature type="helix" evidence="14">
    <location>
        <begin position="133"/>
        <end position="146"/>
    </location>
</feature>
<feature type="helix" evidence="14">
    <location>
        <begin position="156"/>
        <end position="164"/>
    </location>
</feature>
<feature type="helix" evidence="14">
    <location>
        <begin position="173"/>
        <end position="183"/>
    </location>
</feature>
<feature type="turn" evidence="14">
    <location>
        <begin position="184"/>
        <end position="186"/>
    </location>
</feature>
<feature type="strand" evidence="14">
    <location>
        <begin position="187"/>
        <end position="193"/>
    </location>
</feature>
<feature type="helix" evidence="14">
    <location>
        <begin position="194"/>
        <end position="199"/>
    </location>
</feature>
<feature type="helix" evidence="14">
    <location>
        <begin position="201"/>
        <end position="211"/>
    </location>
</feature>
<feature type="helix" evidence="14">
    <location>
        <begin position="218"/>
        <end position="227"/>
    </location>
</feature>
<feature type="helix" evidence="14">
    <location>
        <begin position="230"/>
        <end position="235"/>
    </location>
</feature>
<feature type="helix" evidence="14">
    <location>
        <begin position="265"/>
        <end position="268"/>
    </location>
</feature>
<feature type="helix" evidence="14">
    <location>
        <begin position="271"/>
        <end position="285"/>
    </location>
</feature>